<feature type="chain" id="PRO_0000461076" description="Endolysin PlyTW">
    <location>
        <begin position="1"/>
        <end position="467"/>
    </location>
</feature>
<feature type="domain" description="Peptidase C51" evidence="5">
    <location>
        <begin position="4"/>
        <end position="141"/>
    </location>
</feature>
<feature type="domain" description="N-acetylmuramoyl-L-alanine amidase" evidence="4">
    <location>
        <begin position="189"/>
        <end position="311"/>
    </location>
</feature>
<feature type="domain" description="SH3b" evidence="6">
    <location>
        <begin position="385"/>
        <end position="455"/>
    </location>
</feature>
<feature type="region of interest" description="Disordered" evidence="7">
    <location>
        <begin position="148"/>
        <end position="169"/>
    </location>
</feature>
<feature type="active site" description="For endopeptidase activity" evidence="3">
    <location>
        <position position="29"/>
    </location>
</feature>
<feature type="active site" description="For endopeptidase activity" evidence="3">
    <location>
        <position position="92"/>
    </location>
</feature>
<feature type="active site" description="For endopeptidase activity" evidence="3">
    <location>
        <position position="112"/>
    </location>
</feature>
<feature type="binding site" evidence="3">
    <location>
        <position position="20"/>
    </location>
    <ligand>
        <name>Ca(2+)</name>
        <dbReference type="ChEBI" id="CHEBI:29108"/>
    </ligand>
</feature>
<feature type="binding site" evidence="3">
    <location>
        <position position="22"/>
    </location>
    <ligand>
        <name>Ca(2+)</name>
        <dbReference type="ChEBI" id="CHEBI:29108"/>
    </ligand>
</feature>
<feature type="binding site" evidence="3">
    <location>
        <position position="31"/>
    </location>
    <ligand>
        <name>Ca(2+)</name>
        <dbReference type="ChEBI" id="CHEBI:29108"/>
    </ligand>
</feature>
<feature type="binding site" evidence="1">
    <location>
        <position position="196"/>
    </location>
    <ligand>
        <name>Zn(2+)</name>
        <dbReference type="ChEBI" id="CHEBI:29105"/>
    </ligand>
</feature>
<feature type="binding site" evidence="1">
    <location>
        <position position="301"/>
    </location>
    <ligand>
        <name>Zn(2+)</name>
        <dbReference type="ChEBI" id="CHEBI:29105"/>
    </ligand>
</feature>
<feature type="binding site" evidence="1">
    <location>
        <position position="309"/>
    </location>
    <ligand>
        <name>Zn(2+)</name>
        <dbReference type="ChEBI" id="CHEBI:29105"/>
    </ligand>
</feature>
<gene>
    <name type="primary">plyTW</name>
    <name evidence="13" type="ORF">TwortDSMZ_070</name>
</gene>
<organismHost>
    <name type="scientific">Twortvirus twort</name>
    <dbReference type="NCBI Taxonomy" id="55510"/>
</organismHost>
<accession>O56788</accession>
<evidence type="ECO:0000250" key="1">
    <source>
        <dbReference type="UniProtKB" id="D6QY02"/>
    </source>
</evidence>
<evidence type="ECO:0000250" key="2">
    <source>
        <dbReference type="UniProtKB" id="P00806"/>
    </source>
</evidence>
<evidence type="ECO:0000250" key="3">
    <source>
        <dbReference type="UniProtKB" id="Q6Y7T6"/>
    </source>
</evidence>
<evidence type="ECO:0000255" key="4"/>
<evidence type="ECO:0000255" key="5">
    <source>
        <dbReference type="PROSITE-ProRule" id="PRU00048"/>
    </source>
</evidence>
<evidence type="ECO:0000255" key="6">
    <source>
        <dbReference type="PROSITE-ProRule" id="PRU01117"/>
    </source>
</evidence>
<evidence type="ECO:0000256" key="7">
    <source>
        <dbReference type="SAM" id="MobiDB-lite"/>
    </source>
</evidence>
<evidence type="ECO:0000269" key="8">
    <source>
    </source>
</evidence>
<evidence type="ECO:0000269" key="9">
    <source>
    </source>
</evidence>
<evidence type="ECO:0000303" key="10">
    <source>
    </source>
</evidence>
<evidence type="ECO:0000303" key="11">
    <source>
    </source>
</evidence>
<evidence type="ECO:0000305" key="12"/>
<evidence type="ECO:0000312" key="13">
    <source>
        <dbReference type="EMBL" id="QIW89075.1"/>
    </source>
</evidence>
<dbReference type="EC" id="3.4.22.-" evidence="3"/>
<dbReference type="EC" id="3.5.1.28" evidence="9"/>
<dbReference type="EMBL" id="Y07739">
    <property type="protein sequence ID" value="CAA69021.1"/>
    <property type="molecule type" value="Genomic_DNA"/>
</dbReference>
<dbReference type="EMBL" id="MT151386">
    <property type="protein sequence ID" value="QIW89075.1"/>
    <property type="molecule type" value="Genomic_DNA"/>
</dbReference>
<dbReference type="RefSeq" id="YP_238716.1">
    <property type="nucleotide sequence ID" value="NC_007021.1"/>
</dbReference>
<dbReference type="SMR" id="O56788"/>
<dbReference type="MEROPS" id="C51.001"/>
<dbReference type="KEGG" id="vg:5130450"/>
<dbReference type="OrthoDB" id="15584at10239"/>
<dbReference type="Proteomes" id="UP000503318">
    <property type="component" value="Segment"/>
</dbReference>
<dbReference type="GO" id="GO:0046872">
    <property type="term" value="F:metal ion binding"/>
    <property type="evidence" value="ECO:0007669"/>
    <property type="project" value="UniProtKB-KW"/>
</dbReference>
<dbReference type="GO" id="GO:0008745">
    <property type="term" value="F:N-acetylmuramoyl-L-alanine amidase activity"/>
    <property type="evidence" value="ECO:0007669"/>
    <property type="project" value="UniProtKB-EC"/>
</dbReference>
<dbReference type="GO" id="GO:0008233">
    <property type="term" value="F:peptidase activity"/>
    <property type="evidence" value="ECO:0007669"/>
    <property type="project" value="UniProtKB-KW"/>
</dbReference>
<dbReference type="GO" id="GO:0042742">
    <property type="term" value="P:defense response to bacterium"/>
    <property type="evidence" value="ECO:0007669"/>
    <property type="project" value="UniProtKB-KW"/>
</dbReference>
<dbReference type="GO" id="GO:0009253">
    <property type="term" value="P:peptidoglycan catabolic process"/>
    <property type="evidence" value="ECO:0007669"/>
    <property type="project" value="InterPro"/>
</dbReference>
<dbReference type="GO" id="GO:0006508">
    <property type="term" value="P:proteolysis"/>
    <property type="evidence" value="ECO:0007669"/>
    <property type="project" value="UniProtKB-KW"/>
</dbReference>
<dbReference type="GO" id="GO:0001897">
    <property type="term" value="P:symbiont-mediated cytolysis of host cell"/>
    <property type="evidence" value="ECO:0007669"/>
    <property type="project" value="UniProtKB-ARBA"/>
</dbReference>
<dbReference type="CDD" id="cd06583">
    <property type="entry name" value="PGRP"/>
    <property type="match status" value="1"/>
</dbReference>
<dbReference type="Gene3D" id="3.90.1720.10">
    <property type="entry name" value="endopeptidase domain like (from Nostoc punctiforme)"/>
    <property type="match status" value="1"/>
</dbReference>
<dbReference type="Gene3D" id="3.40.80.10">
    <property type="entry name" value="Peptidoglycan recognition protein-like"/>
    <property type="match status" value="1"/>
</dbReference>
<dbReference type="Gene3D" id="2.30.30.40">
    <property type="entry name" value="SH3 Domains"/>
    <property type="match status" value="1"/>
</dbReference>
<dbReference type="InterPro" id="IPR036505">
    <property type="entry name" value="Amidase/PGRP_sf"/>
</dbReference>
<dbReference type="InterPro" id="IPR002502">
    <property type="entry name" value="Amidase_domain"/>
</dbReference>
<dbReference type="InterPro" id="IPR007921">
    <property type="entry name" value="CHAP_dom"/>
</dbReference>
<dbReference type="InterPro" id="IPR038765">
    <property type="entry name" value="Papain-like_cys_pep_sf"/>
</dbReference>
<dbReference type="InterPro" id="IPR003646">
    <property type="entry name" value="SH3-like_bac-type"/>
</dbReference>
<dbReference type="Pfam" id="PF01510">
    <property type="entry name" value="Amidase_2"/>
    <property type="match status" value="1"/>
</dbReference>
<dbReference type="Pfam" id="PF05257">
    <property type="entry name" value="CHAP"/>
    <property type="match status" value="1"/>
</dbReference>
<dbReference type="Pfam" id="PF08460">
    <property type="entry name" value="SH3_5"/>
    <property type="match status" value="1"/>
</dbReference>
<dbReference type="SMART" id="SM00644">
    <property type="entry name" value="Ami_2"/>
    <property type="match status" value="1"/>
</dbReference>
<dbReference type="SMART" id="SM00287">
    <property type="entry name" value="SH3b"/>
    <property type="match status" value="1"/>
</dbReference>
<dbReference type="SUPFAM" id="SSF54001">
    <property type="entry name" value="Cysteine proteinases"/>
    <property type="match status" value="1"/>
</dbReference>
<dbReference type="SUPFAM" id="SSF55846">
    <property type="entry name" value="N-acetylmuramoyl-L-alanine amidase-like"/>
    <property type="match status" value="1"/>
</dbReference>
<dbReference type="PROSITE" id="PS50911">
    <property type="entry name" value="CHAP"/>
    <property type="match status" value="1"/>
</dbReference>
<dbReference type="PROSITE" id="PS51781">
    <property type="entry name" value="SH3B"/>
    <property type="match status" value="1"/>
</dbReference>
<organism>
    <name type="scientific">Staphylococcus phage Twort (strain DSM 17442 / HER 48)</name>
    <name type="common">Bacteriophage Twort</name>
    <dbReference type="NCBI Taxonomy" id="2908167"/>
    <lineage>
        <taxon>Viruses</taxon>
        <taxon>Duplodnaviria</taxon>
        <taxon>Heunggongvirae</taxon>
        <taxon>Uroviricota</taxon>
        <taxon>Caudoviricetes</taxon>
        <taxon>Herelleviridae</taxon>
        <taxon>Twortvirinae</taxon>
        <taxon>Twortvirus</taxon>
        <taxon>Twortvirus twort</taxon>
    </lineage>
</organism>
<reference key="1">
    <citation type="journal article" date="1998" name="FEMS Microbiol. Lett.">
        <title>The two-component lysis system of Staphylococcus aureus bacteriophage Twort: a large TTG-start holin and an associated amidase endolysin.</title>
        <authorList>
            <person name="Loessner M.J."/>
            <person name="Gaeng S."/>
            <person name="Wendlinger G."/>
            <person name="Maier S.K."/>
            <person name="Scherer S."/>
        </authorList>
    </citation>
    <scope>NUCLEOTIDE SEQUENCE [GENOMIC DNA]</scope>
    <scope>FUNCTION</scope>
    <scope>CATALYTIC ACTIVITY</scope>
    <scope>DOMAIN</scope>
</reference>
<reference key="2">
    <citation type="submission" date="2020-03" db="EMBL/GenBank/DDBJ databases">
        <title>Variable regions in the genome of staphylococcal bacteriophage Twort.</title>
        <authorList>
            <person name="Glowacka-Rutkowska A."/>
            <person name="Gawor J."/>
            <person name="Lobocka M."/>
        </authorList>
    </citation>
    <scope>NUCLEOTIDE SEQUENCE [GENOMIC DNA]</scope>
</reference>
<reference key="3">
    <citation type="journal article" date="2015" name="FEMS Microbiol. Lett.">
        <title>Lytic activity of the staphylolytic Twort phage endolysin CHAP domain is enhanced by the SH3b cell wall binding domain.</title>
        <authorList>
            <person name="Becker S.C."/>
            <person name="Swift S."/>
            <person name="Korobova O."/>
            <person name="Schischkova N."/>
            <person name="Kopylov P."/>
            <person name="Donovan D.M."/>
            <person name="Abaev I."/>
        </authorList>
    </citation>
    <scope>DOMAIN</scope>
    <scope>FUNCTION</scope>
</reference>
<keyword id="KW-0929">Antimicrobial</keyword>
<keyword id="KW-0081">Bacteriolytic enzyme</keyword>
<keyword id="KW-0106">Calcium</keyword>
<keyword id="KW-0378">Hydrolase</keyword>
<keyword id="KW-0479">Metal-binding</keyword>
<keyword id="KW-0511">Multifunctional enzyme</keyword>
<keyword id="KW-0645">Protease</keyword>
<keyword id="KW-0862">Zinc</keyword>
<proteinExistence type="evidence at protein level"/>
<name>ENLYS_BPTWO</name>
<comment type="function">
    <text evidence="3 8 9">Endolysin that degrades host peptidoglycans and participates in the sequential events which lead to the programmed host cell lysis releasing the mature viral particles (PubMed:25790497, PubMed:9627962). The CHAP activity cleaves the peptidic bond between the D-alanine of the tetra-peptide stem and the first glycine of the penta-glycine cross-bridge (By similarity). The N-acetyl-muramidase activity cleaves between N-acetylmuramic acid and N-acetylglucosamine bonds (By similarity).</text>
</comment>
<comment type="catalytic activity">
    <reaction evidence="9">
        <text>Hydrolyzes the link between N-acetylmuramoyl residues and L-amino acid residues in certain cell-wall glycopeptides.</text>
        <dbReference type="EC" id="3.5.1.28"/>
    </reaction>
</comment>
<comment type="cofactor">
    <cofactor evidence="2">
        <name>Zn(2+)</name>
        <dbReference type="ChEBI" id="CHEBI:29105"/>
    </cofactor>
    <text evidence="2">Zn(2+) is required for amidase activity.</text>
</comment>
<comment type="domain">
    <text evidence="3 8">Contains a cysteine-histidine dependent amido-hydrolase/peptidase domain (peptidase C51/CHAP domain) at the N-terminus, a central amidase domain and a SH3b cell wall-binding domain at the C-terminus (By similarity). The CHAP domain contains a tightly bound structural Ca(2+) ion and it is present at the N-terminus and is associated with the endopeptidase activity (By similarity). The SH3b domain increases the CHAP domain activity (PubMed:25790497).</text>
</comment>
<comment type="similarity">
    <text evidence="12">Belongs to the N-acetylmuramoyl-L-alanine amidase 2 family.</text>
</comment>
<protein>
    <recommendedName>
        <fullName evidence="10">Endolysin PlyTW</fullName>
    </recommendedName>
    <alternativeName>
        <fullName evidence="3">D-alanyl-glycyl endopeptidase</fullName>
        <ecNumber evidence="3">3.4.22.-</ecNumber>
    </alternativeName>
    <alternativeName>
        <fullName evidence="11">N-acetylmuramoyl-L-alanine amidase</fullName>
        <ecNumber evidence="9">3.5.1.28</ecNumber>
    </alternativeName>
</protein>
<sequence>MKTLKQAESYIKSKVNTGTDFDGLYGYQCMDLAVDYIYHVTDGKIRMWGNAKDAINNSFGGTATVYKNYPAFRPKYGDVVVWTTGNFATYGHIAIVTNPDPYGDLQYVTVLEQNWNGNGIYKTELATIRTHDYTGITHFIRPNFATESSVKKKDTKKKPKPSNRDGINKDKIVYDRTNINYNMVKRGYNPVGVILHNDAGSMTGLQYKNNLQNAGYNRWAQGIAHSYISEGQVWQALGESRIAWHCANQWGNKNLYGIEICQSMTASDEQFLKNEQTAFYEASRMLKKWGLKPDKNTVRLHMEYYQTACPHRSMKLHVGKDPTKTSITQADIEKLKEYFIKQIKMYYEGKTPVPTVVNQKAKTKPVKQSSTSGWNVNNYGTYYKSESATFKCTARQGIVTRYTGPFTTCPQAGVLYYGQSVTYDTVCKQDGYVWISWTTNGGQDVWMPVRTWDKNTDIMGQLWGDIY</sequence>